<reference key="1">
    <citation type="journal article" date="2004" name="Nature">
        <title>Genome evolution in yeasts.</title>
        <authorList>
            <person name="Dujon B."/>
            <person name="Sherman D."/>
            <person name="Fischer G."/>
            <person name="Durrens P."/>
            <person name="Casaregola S."/>
            <person name="Lafontaine I."/>
            <person name="de Montigny J."/>
            <person name="Marck C."/>
            <person name="Neuveglise C."/>
            <person name="Talla E."/>
            <person name="Goffard N."/>
            <person name="Frangeul L."/>
            <person name="Aigle M."/>
            <person name="Anthouard V."/>
            <person name="Babour A."/>
            <person name="Barbe V."/>
            <person name="Barnay S."/>
            <person name="Blanchin S."/>
            <person name="Beckerich J.-M."/>
            <person name="Beyne E."/>
            <person name="Bleykasten C."/>
            <person name="Boisrame A."/>
            <person name="Boyer J."/>
            <person name="Cattolico L."/>
            <person name="Confanioleri F."/>
            <person name="de Daruvar A."/>
            <person name="Despons L."/>
            <person name="Fabre E."/>
            <person name="Fairhead C."/>
            <person name="Ferry-Dumazet H."/>
            <person name="Groppi A."/>
            <person name="Hantraye F."/>
            <person name="Hennequin C."/>
            <person name="Jauniaux N."/>
            <person name="Joyet P."/>
            <person name="Kachouri R."/>
            <person name="Kerrest A."/>
            <person name="Koszul R."/>
            <person name="Lemaire M."/>
            <person name="Lesur I."/>
            <person name="Ma L."/>
            <person name="Muller H."/>
            <person name="Nicaud J.-M."/>
            <person name="Nikolski M."/>
            <person name="Oztas S."/>
            <person name="Ozier-Kalogeropoulos O."/>
            <person name="Pellenz S."/>
            <person name="Potier S."/>
            <person name="Richard G.-F."/>
            <person name="Straub M.-L."/>
            <person name="Suleau A."/>
            <person name="Swennen D."/>
            <person name="Tekaia F."/>
            <person name="Wesolowski-Louvel M."/>
            <person name="Westhof E."/>
            <person name="Wirth B."/>
            <person name="Zeniou-Meyer M."/>
            <person name="Zivanovic Y."/>
            <person name="Bolotin-Fukuhara M."/>
            <person name="Thierry A."/>
            <person name="Bouchier C."/>
            <person name="Caudron B."/>
            <person name="Scarpelli C."/>
            <person name="Gaillardin C."/>
            <person name="Weissenbach J."/>
            <person name="Wincker P."/>
            <person name="Souciet J.-L."/>
        </authorList>
    </citation>
    <scope>NUCLEOTIDE SEQUENCE [LARGE SCALE GENOMIC DNA]</scope>
    <source>
        <strain>ATCC 2001 / BCRC 20586 / JCM 3761 / NBRC 0622 / NRRL Y-65 / CBS 138</strain>
    </source>
</reference>
<proteinExistence type="inferred from homology"/>
<comment type="function">
    <text evidence="1">Component of the ESCRT-0 complex which is the sorting receptor for ubiquitinated cargo proteins at the multivesicular body (MVB).</text>
</comment>
<comment type="subunit">
    <text evidence="1">Component of the ESCRT-0 complex composed of HSE1 and VPS27.</text>
</comment>
<comment type="subcellular location">
    <subcellularLocation>
        <location evidence="1">Endosome membrane</location>
        <topology evidence="1">Peripheral membrane protein</topology>
        <orientation evidence="1">Cytoplasmic side</orientation>
    </subcellularLocation>
</comment>
<comment type="similarity">
    <text evidence="6">Belongs to the STAM family.</text>
</comment>
<gene>
    <name type="primary">HSE1</name>
    <name type="ordered locus">CAGL0K02761g</name>
</gene>
<accession>Q6FN49</accession>
<dbReference type="EMBL" id="CR380957">
    <property type="protein sequence ID" value="CAG61306.1"/>
    <property type="molecule type" value="Genomic_DNA"/>
</dbReference>
<dbReference type="RefSeq" id="XP_448345.1">
    <property type="nucleotide sequence ID" value="XM_448345.1"/>
</dbReference>
<dbReference type="SMR" id="Q6FN49"/>
<dbReference type="FunCoup" id="Q6FN49">
    <property type="interactions" value="391"/>
</dbReference>
<dbReference type="STRING" id="284593.Q6FN49"/>
<dbReference type="EnsemblFungi" id="CAGL0K02761g-T">
    <property type="protein sequence ID" value="CAGL0K02761g-T-p1"/>
    <property type="gene ID" value="CAGL0K02761g"/>
</dbReference>
<dbReference type="KEGG" id="cgr:2890271"/>
<dbReference type="CGD" id="CAL0134043">
    <property type="gene designation" value="CAGL0K02761g"/>
</dbReference>
<dbReference type="VEuPathDB" id="FungiDB:CAGL0K02761g"/>
<dbReference type="eggNOG" id="KOG2199">
    <property type="taxonomic scope" value="Eukaryota"/>
</dbReference>
<dbReference type="HOGENOM" id="CLU_010104_2_0_1"/>
<dbReference type="InParanoid" id="Q6FN49"/>
<dbReference type="OMA" id="QVYRDWW"/>
<dbReference type="Proteomes" id="UP000002428">
    <property type="component" value="Chromosome K"/>
</dbReference>
<dbReference type="GO" id="GO:0010008">
    <property type="term" value="C:endosome membrane"/>
    <property type="evidence" value="ECO:0007669"/>
    <property type="project" value="UniProtKB-SubCell"/>
</dbReference>
<dbReference type="GO" id="GO:0033565">
    <property type="term" value="C:ESCRT-0 complex"/>
    <property type="evidence" value="ECO:0007669"/>
    <property type="project" value="EnsemblFungi"/>
</dbReference>
<dbReference type="GO" id="GO:0005774">
    <property type="term" value="C:vacuolar membrane"/>
    <property type="evidence" value="ECO:0007669"/>
    <property type="project" value="EnsemblFungi"/>
</dbReference>
<dbReference type="GO" id="GO:0035091">
    <property type="term" value="F:phosphatidylinositol binding"/>
    <property type="evidence" value="ECO:0007669"/>
    <property type="project" value="InterPro"/>
</dbReference>
<dbReference type="GO" id="GO:0019904">
    <property type="term" value="F:protein domain specific binding"/>
    <property type="evidence" value="ECO:0007669"/>
    <property type="project" value="EnsemblFungi"/>
</dbReference>
<dbReference type="GO" id="GO:0046982">
    <property type="term" value="F:protein heterodimerization activity"/>
    <property type="evidence" value="ECO:0007669"/>
    <property type="project" value="EnsemblFungi"/>
</dbReference>
<dbReference type="GO" id="GO:0043130">
    <property type="term" value="F:ubiquitin binding"/>
    <property type="evidence" value="ECO:0007669"/>
    <property type="project" value="EnsemblFungi"/>
</dbReference>
<dbReference type="GO" id="GO:1904669">
    <property type="term" value="P:ATP export"/>
    <property type="evidence" value="ECO:0007669"/>
    <property type="project" value="EnsemblFungi"/>
</dbReference>
<dbReference type="GO" id="GO:0016237">
    <property type="term" value="P:microautophagy"/>
    <property type="evidence" value="ECO:0007669"/>
    <property type="project" value="EnsemblFungi"/>
</dbReference>
<dbReference type="GO" id="GO:1903319">
    <property type="term" value="P:positive regulation of protein maturation"/>
    <property type="evidence" value="ECO:0007669"/>
    <property type="project" value="EnsemblFungi"/>
</dbReference>
<dbReference type="GO" id="GO:0009306">
    <property type="term" value="P:protein secretion"/>
    <property type="evidence" value="ECO:0007669"/>
    <property type="project" value="EnsemblFungi"/>
</dbReference>
<dbReference type="GO" id="GO:0006623">
    <property type="term" value="P:protein targeting to vacuole"/>
    <property type="evidence" value="ECO:0007669"/>
    <property type="project" value="EnsemblFungi"/>
</dbReference>
<dbReference type="GO" id="GO:0043328">
    <property type="term" value="P:protein transport to vacuole involved in ubiquitin-dependent protein catabolic process via the multivesicular body sorting pathway"/>
    <property type="evidence" value="ECO:0007669"/>
    <property type="project" value="TreeGrafter"/>
</dbReference>
<dbReference type="CDD" id="cd21386">
    <property type="entry name" value="GAT_Hse1"/>
    <property type="match status" value="1"/>
</dbReference>
<dbReference type="CDD" id="cd11805">
    <property type="entry name" value="SH3_GRB2_like_C"/>
    <property type="match status" value="1"/>
</dbReference>
<dbReference type="CDD" id="cd16978">
    <property type="entry name" value="VHS_HSE1"/>
    <property type="match status" value="1"/>
</dbReference>
<dbReference type="FunFam" id="2.30.30.40:FF:000072">
    <property type="entry name" value="Unconventional Myosin IB"/>
    <property type="match status" value="1"/>
</dbReference>
<dbReference type="Gene3D" id="1.20.5.1940">
    <property type="match status" value="1"/>
</dbReference>
<dbReference type="Gene3D" id="1.25.40.90">
    <property type="match status" value="1"/>
</dbReference>
<dbReference type="Gene3D" id="2.30.30.40">
    <property type="entry name" value="SH3 Domains"/>
    <property type="match status" value="1"/>
</dbReference>
<dbReference type="InterPro" id="IPR008942">
    <property type="entry name" value="ENTH_VHS"/>
</dbReference>
<dbReference type="InterPro" id="IPR036028">
    <property type="entry name" value="SH3-like_dom_sf"/>
</dbReference>
<dbReference type="InterPro" id="IPR001452">
    <property type="entry name" value="SH3_domain"/>
</dbReference>
<dbReference type="InterPro" id="IPR050670">
    <property type="entry name" value="STAM"/>
</dbReference>
<dbReference type="InterPro" id="IPR003903">
    <property type="entry name" value="UIM_dom"/>
</dbReference>
<dbReference type="InterPro" id="IPR002014">
    <property type="entry name" value="VHS_dom"/>
</dbReference>
<dbReference type="PANTHER" id="PTHR45929">
    <property type="entry name" value="JAK PATHWAY SIGNAL TRANSDUCTION ADAPTOR MOLECULE"/>
    <property type="match status" value="1"/>
</dbReference>
<dbReference type="PANTHER" id="PTHR45929:SF3">
    <property type="entry name" value="JAK PATHWAY SIGNAL TRANSDUCTION ADAPTOR MOLECULE"/>
    <property type="match status" value="1"/>
</dbReference>
<dbReference type="Pfam" id="PF00018">
    <property type="entry name" value="SH3_1"/>
    <property type="match status" value="1"/>
</dbReference>
<dbReference type="Pfam" id="PF02809">
    <property type="entry name" value="UIM"/>
    <property type="match status" value="1"/>
</dbReference>
<dbReference type="Pfam" id="PF00790">
    <property type="entry name" value="VHS"/>
    <property type="match status" value="1"/>
</dbReference>
<dbReference type="PRINTS" id="PR00499">
    <property type="entry name" value="P67PHOX"/>
</dbReference>
<dbReference type="PRINTS" id="PR00452">
    <property type="entry name" value="SH3DOMAIN"/>
</dbReference>
<dbReference type="SMART" id="SM00326">
    <property type="entry name" value="SH3"/>
    <property type="match status" value="1"/>
</dbReference>
<dbReference type="SMART" id="SM00726">
    <property type="entry name" value="UIM"/>
    <property type="match status" value="1"/>
</dbReference>
<dbReference type="SMART" id="SM00288">
    <property type="entry name" value="VHS"/>
    <property type="match status" value="1"/>
</dbReference>
<dbReference type="SUPFAM" id="SSF48464">
    <property type="entry name" value="ENTH/VHS domain"/>
    <property type="match status" value="1"/>
</dbReference>
<dbReference type="SUPFAM" id="SSF50044">
    <property type="entry name" value="SH3-domain"/>
    <property type="match status" value="1"/>
</dbReference>
<dbReference type="PROSITE" id="PS50002">
    <property type="entry name" value="SH3"/>
    <property type="match status" value="1"/>
</dbReference>
<dbReference type="PROSITE" id="PS50330">
    <property type="entry name" value="UIM"/>
    <property type="match status" value="1"/>
</dbReference>
<dbReference type="PROSITE" id="PS50179">
    <property type="entry name" value="VHS"/>
    <property type="match status" value="1"/>
</dbReference>
<protein>
    <recommendedName>
        <fullName>Class E vacuolar protein-sorting machinery protein HSE1</fullName>
    </recommendedName>
</protein>
<sequence length="450" mass="50644">MPSLEVKLRKAVLAATDGKLRSDNWQYIIGVCDLVKEDPEDASQIVMEMIEKRLGQNDANVMLRSLALVVALAENCGSRLKQQVSSKHFTGILAQLLESGDVHMTVKKEIAKVVKQLSDSFKSDPSLKTMGDLNTRIRRKWPGLLEEPEKPSKQKVSHQEATDEDQELQRALKMSLEEFEKSKQQSNGSAVQSNSLQDHNQGQQQPQQQTTSGIRRVRALYDLNANEQDELSFRKGDVIVVLEQVYRDWWRGSLHGKIGIFPLNYVTPITEPSPVESQREQQIEEGVLSQAQNVQVLSAKMQMASGKGLSELNQDPEFNDLYSTVTPIRPHVTKLIGKYAKEKDDVIALRQVLLNAESTYNELLDRAAKSYSIPNTQAPPYAPAVTSQPGYVSNNTYQTTNGQYTQHNITPQQQYQVPSQNYQSQPPSMQSNHYIGYQHPGINDQPPPNY</sequence>
<keyword id="KW-0967">Endosome</keyword>
<keyword id="KW-0472">Membrane</keyword>
<keyword id="KW-0653">Protein transport</keyword>
<keyword id="KW-1185">Reference proteome</keyword>
<keyword id="KW-0728">SH3 domain</keyword>
<keyword id="KW-0813">Transport</keyword>
<organism>
    <name type="scientific">Candida glabrata (strain ATCC 2001 / BCRC 20586 / JCM 3761 / NBRC 0622 / NRRL Y-65 / CBS 138)</name>
    <name type="common">Yeast</name>
    <name type="synonym">Nakaseomyces glabratus</name>
    <dbReference type="NCBI Taxonomy" id="284593"/>
    <lineage>
        <taxon>Eukaryota</taxon>
        <taxon>Fungi</taxon>
        <taxon>Dikarya</taxon>
        <taxon>Ascomycota</taxon>
        <taxon>Saccharomycotina</taxon>
        <taxon>Saccharomycetes</taxon>
        <taxon>Saccharomycetales</taxon>
        <taxon>Saccharomycetaceae</taxon>
        <taxon>Nakaseomyces</taxon>
    </lineage>
</organism>
<evidence type="ECO:0000250" key="1"/>
<evidence type="ECO:0000255" key="2">
    <source>
        <dbReference type="PROSITE-ProRule" id="PRU00192"/>
    </source>
</evidence>
<evidence type="ECO:0000255" key="3">
    <source>
        <dbReference type="PROSITE-ProRule" id="PRU00213"/>
    </source>
</evidence>
<evidence type="ECO:0000255" key="4">
    <source>
        <dbReference type="PROSITE-ProRule" id="PRU00218"/>
    </source>
</evidence>
<evidence type="ECO:0000256" key="5">
    <source>
        <dbReference type="SAM" id="MobiDB-lite"/>
    </source>
</evidence>
<evidence type="ECO:0000305" key="6"/>
<feature type="chain" id="PRO_0000292491" description="Class E vacuolar protein-sorting machinery protein HSE1">
    <location>
        <begin position="1"/>
        <end position="450"/>
    </location>
</feature>
<feature type="domain" description="VHS" evidence="4">
    <location>
        <begin position="15"/>
        <end position="145"/>
    </location>
</feature>
<feature type="domain" description="UIM" evidence="3">
    <location>
        <begin position="163"/>
        <end position="182"/>
    </location>
</feature>
<feature type="domain" description="SH3" evidence="2">
    <location>
        <begin position="212"/>
        <end position="271"/>
    </location>
</feature>
<feature type="region of interest" description="Disordered" evidence="5">
    <location>
        <begin position="141"/>
        <end position="167"/>
    </location>
</feature>
<feature type="region of interest" description="Disordered" evidence="5">
    <location>
        <begin position="179"/>
        <end position="212"/>
    </location>
</feature>
<feature type="region of interest" description="Disordered" evidence="5">
    <location>
        <begin position="374"/>
        <end position="450"/>
    </location>
</feature>
<feature type="compositionally biased region" description="Basic and acidic residues" evidence="5">
    <location>
        <begin position="147"/>
        <end position="167"/>
    </location>
</feature>
<feature type="compositionally biased region" description="Polar residues" evidence="5">
    <location>
        <begin position="184"/>
        <end position="196"/>
    </location>
</feature>
<feature type="compositionally biased region" description="Low complexity" evidence="5">
    <location>
        <begin position="197"/>
        <end position="209"/>
    </location>
</feature>
<feature type="compositionally biased region" description="Low complexity" evidence="5">
    <location>
        <begin position="394"/>
        <end position="432"/>
    </location>
</feature>
<name>HSE1_CANGA</name>